<geneLocation type="chloroplast"/>
<sequence>MVREKVKVSTRTLQWKCVESRKDSKRLYYGRFILSPLMKGQADTIGIAMRRALLGEIEGTCITRAKSENIPHDYSNIVGIQESVHEILMNLNEIVLRSNLYGTRNALICVQGPGYITAQDIILPPSVEIIDNTQHIATLTEPIDLCIELKIERNRGYSLKMSNNFEDRSYPIDAVFMPVQNANHSIHSYGNGNEKQEILFLEIWTNGSLTPKEALHEASRNLINLFIPFLHVEEETFYLENNQHQVTLPLFPFHNRLVNLRKKKKELAFQYIFIDQLELPPRIYNCLKKSNIHTLLDLLNNSQEDLIKIEHFHMEDVKKILDILEKK</sequence>
<proteinExistence type="inferred from homology"/>
<name>RPOA_LOBMA</name>
<comment type="function">
    <text evidence="1">DNA-dependent RNA polymerase catalyzes the transcription of DNA into RNA using the four ribonucleoside triphosphates as substrates.</text>
</comment>
<comment type="catalytic activity">
    <reaction evidence="1">
        <text>RNA(n) + a ribonucleoside 5'-triphosphate = RNA(n+1) + diphosphate</text>
        <dbReference type="Rhea" id="RHEA:21248"/>
        <dbReference type="Rhea" id="RHEA-COMP:14527"/>
        <dbReference type="Rhea" id="RHEA-COMP:17342"/>
        <dbReference type="ChEBI" id="CHEBI:33019"/>
        <dbReference type="ChEBI" id="CHEBI:61557"/>
        <dbReference type="ChEBI" id="CHEBI:140395"/>
        <dbReference type="EC" id="2.7.7.6"/>
    </reaction>
</comment>
<comment type="subunit">
    <text evidence="1">In plastids the minimal PEP RNA polymerase catalytic core is composed of four subunits: alpha, beta, beta', and beta''. When a (nuclear-encoded) sigma factor is associated with the core the holoenzyme is formed, which can initiate transcription.</text>
</comment>
<comment type="subcellular location">
    <subcellularLocation>
        <location>Plastid</location>
        <location>Chloroplast</location>
    </subcellularLocation>
</comment>
<comment type="domain">
    <text evidence="1">The N-terminal domain is essential for RNAP assembly and basal transcription, whereas the C-terminal domain is involved in interaction with transcriptional regulators and with upstream promoter elements.</text>
</comment>
<comment type="similarity">
    <text evidence="1">Belongs to the RNA polymerase alpha chain family.</text>
</comment>
<keyword id="KW-0150">Chloroplast</keyword>
<keyword id="KW-0240">DNA-directed RNA polymerase</keyword>
<keyword id="KW-0548">Nucleotidyltransferase</keyword>
<keyword id="KW-0934">Plastid</keyword>
<keyword id="KW-0804">Transcription</keyword>
<keyword id="KW-0808">Transferase</keyword>
<reference key="1">
    <citation type="submission" date="2007-03" db="EMBL/GenBank/DDBJ databases">
        <title>Sequencing analysis of Lobularia maritima chloroplast DNA.</title>
        <authorList>
            <person name="Hosouchi T."/>
            <person name="Tsuruoka H."/>
            <person name="Kotani H."/>
        </authorList>
    </citation>
    <scope>NUCLEOTIDE SEQUENCE [LARGE SCALE GENOMIC DNA]</scope>
</reference>
<feature type="chain" id="PRO_0000296896" description="DNA-directed RNA polymerase subunit alpha">
    <location>
        <begin position="1"/>
        <end position="327"/>
    </location>
</feature>
<feature type="region of interest" description="Alpha N-terminal domain (alpha-NTD)" evidence="1">
    <location>
        <begin position="1"/>
        <end position="233"/>
    </location>
</feature>
<feature type="region of interest" description="Alpha C-terminal domain (alpha-CTD)" evidence="1">
    <location>
        <begin position="267"/>
        <end position="327"/>
    </location>
</feature>
<protein>
    <recommendedName>
        <fullName evidence="1">DNA-directed RNA polymerase subunit alpha</fullName>
        <shortName evidence="1">PEP</shortName>
        <ecNumber evidence="1">2.7.7.6</ecNumber>
    </recommendedName>
    <alternativeName>
        <fullName evidence="1">Plastid-encoded RNA polymerase subunit alpha</fullName>
        <shortName evidence="1">RNA polymerase subunit alpha</shortName>
    </alternativeName>
</protein>
<accession>A4QLM6</accession>
<gene>
    <name evidence="1" type="primary">rpoA</name>
</gene>
<dbReference type="EC" id="2.7.7.6" evidence="1"/>
<dbReference type="EMBL" id="AP009375">
    <property type="protein sequence ID" value="BAF50581.1"/>
    <property type="molecule type" value="Genomic_DNA"/>
</dbReference>
<dbReference type="RefSeq" id="YP_001123757.1">
    <property type="nucleotide sequence ID" value="NC_009274.1"/>
</dbReference>
<dbReference type="SMR" id="A4QLM6"/>
<dbReference type="GeneID" id="4964903"/>
<dbReference type="GO" id="GO:0009507">
    <property type="term" value="C:chloroplast"/>
    <property type="evidence" value="ECO:0007669"/>
    <property type="project" value="UniProtKB-SubCell"/>
</dbReference>
<dbReference type="GO" id="GO:0000428">
    <property type="term" value="C:DNA-directed RNA polymerase complex"/>
    <property type="evidence" value="ECO:0007669"/>
    <property type="project" value="UniProtKB-KW"/>
</dbReference>
<dbReference type="GO" id="GO:0005739">
    <property type="term" value="C:mitochondrion"/>
    <property type="evidence" value="ECO:0007669"/>
    <property type="project" value="GOC"/>
</dbReference>
<dbReference type="GO" id="GO:0003677">
    <property type="term" value="F:DNA binding"/>
    <property type="evidence" value="ECO:0007669"/>
    <property type="project" value="UniProtKB-UniRule"/>
</dbReference>
<dbReference type="GO" id="GO:0003899">
    <property type="term" value="F:DNA-directed RNA polymerase activity"/>
    <property type="evidence" value="ECO:0007669"/>
    <property type="project" value="UniProtKB-UniRule"/>
</dbReference>
<dbReference type="GO" id="GO:0046983">
    <property type="term" value="F:protein dimerization activity"/>
    <property type="evidence" value="ECO:0007669"/>
    <property type="project" value="InterPro"/>
</dbReference>
<dbReference type="GO" id="GO:0006351">
    <property type="term" value="P:DNA-templated transcription"/>
    <property type="evidence" value="ECO:0007669"/>
    <property type="project" value="UniProtKB-UniRule"/>
</dbReference>
<dbReference type="CDD" id="cd06928">
    <property type="entry name" value="RNAP_alpha_NTD"/>
    <property type="match status" value="1"/>
</dbReference>
<dbReference type="FunFam" id="1.10.150.20:FF:000021">
    <property type="entry name" value="DNA-directed RNA polymerase subunit alpha"/>
    <property type="match status" value="1"/>
</dbReference>
<dbReference type="FunFam" id="2.170.120.12:FF:000001">
    <property type="entry name" value="DNA-directed RNA polymerase subunit alpha"/>
    <property type="match status" value="1"/>
</dbReference>
<dbReference type="FunFam" id="3.30.1360.10:FF:000039">
    <property type="entry name" value="DNA-directed RNA polymerase subunit alpha"/>
    <property type="match status" value="1"/>
</dbReference>
<dbReference type="Gene3D" id="1.10.150.20">
    <property type="entry name" value="5' to 3' exonuclease, C-terminal subdomain"/>
    <property type="match status" value="1"/>
</dbReference>
<dbReference type="Gene3D" id="2.170.120.12">
    <property type="entry name" value="DNA-directed RNA polymerase, insert domain"/>
    <property type="match status" value="1"/>
</dbReference>
<dbReference type="Gene3D" id="3.30.1360.10">
    <property type="entry name" value="RNA polymerase, RBP11-like subunit"/>
    <property type="match status" value="1"/>
</dbReference>
<dbReference type="HAMAP" id="MF_00059">
    <property type="entry name" value="RNApol_bact_RpoA"/>
    <property type="match status" value="1"/>
</dbReference>
<dbReference type="InterPro" id="IPR011262">
    <property type="entry name" value="DNA-dir_RNA_pol_insert"/>
</dbReference>
<dbReference type="InterPro" id="IPR011263">
    <property type="entry name" value="DNA-dir_RNA_pol_RpoA/D/Rpb3"/>
</dbReference>
<dbReference type="InterPro" id="IPR011773">
    <property type="entry name" value="DNA-dir_RpoA"/>
</dbReference>
<dbReference type="InterPro" id="IPR036603">
    <property type="entry name" value="RBP11-like"/>
</dbReference>
<dbReference type="InterPro" id="IPR011260">
    <property type="entry name" value="RNAP_asu_C"/>
</dbReference>
<dbReference type="InterPro" id="IPR036643">
    <property type="entry name" value="RNApol_insert_sf"/>
</dbReference>
<dbReference type="NCBIfam" id="TIGR02027">
    <property type="entry name" value="rpoA"/>
    <property type="match status" value="1"/>
</dbReference>
<dbReference type="Pfam" id="PF01000">
    <property type="entry name" value="RNA_pol_A_bac"/>
    <property type="match status" value="1"/>
</dbReference>
<dbReference type="Pfam" id="PF03118">
    <property type="entry name" value="RNA_pol_A_CTD"/>
    <property type="match status" value="1"/>
</dbReference>
<dbReference type="Pfam" id="PF01193">
    <property type="entry name" value="RNA_pol_L"/>
    <property type="match status" value="1"/>
</dbReference>
<dbReference type="SMART" id="SM00662">
    <property type="entry name" value="RPOLD"/>
    <property type="match status" value="1"/>
</dbReference>
<dbReference type="SUPFAM" id="SSF47789">
    <property type="entry name" value="C-terminal domain of RNA polymerase alpha subunit"/>
    <property type="match status" value="1"/>
</dbReference>
<dbReference type="SUPFAM" id="SSF56553">
    <property type="entry name" value="Insert subdomain of RNA polymerase alpha subunit"/>
    <property type="match status" value="1"/>
</dbReference>
<dbReference type="SUPFAM" id="SSF55257">
    <property type="entry name" value="RBP11-like subunits of RNA polymerase"/>
    <property type="match status" value="1"/>
</dbReference>
<evidence type="ECO:0000255" key="1">
    <source>
        <dbReference type="HAMAP-Rule" id="MF_00059"/>
    </source>
</evidence>
<organism>
    <name type="scientific">Lobularia maritima</name>
    <name type="common">Sweet alyssum</name>
    <name type="synonym">Alyssum maritimum</name>
    <dbReference type="NCBI Taxonomy" id="226051"/>
    <lineage>
        <taxon>Eukaryota</taxon>
        <taxon>Viridiplantae</taxon>
        <taxon>Streptophyta</taxon>
        <taxon>Embryophyta</taxon>
        <taxon>Tracheophyta</taxon>
        <taxon>Spermatophyta</taxon>
        <taxon>Magnoliopsida</taxon>
        <taxon>eudicotyledons</taxon>
        <taxon>Gunneridae</taxon>
        <taxon>Pentapetalae</taxon>
        <taxon>rosids</taxon>
        <taxon>malvids</taxon>
        <taxon>Brassicales</taxon>
        <taxon>Brassicaceae</taxon>
        <taxon>Anastaticeae</taxon>
        <taxon>Lobularia</taxon>
    </lineage>
</organism>